<evidence type="ECO:0000255" key="1">
    <source>
        <dbReference type="PROSITE-ProRule" id="PRU00303"/>
    </source>
</evidence>
<evidence type="ECO:0000305" key="2"/>
<evidence type="ECO:0007829" key="3">
    <source>
        <dbReference type="PDB" id="3N54"/>
    </source>
</evidence>
<reference key="1">
    <citation type="journal article" date="1994" name="Microbiology">
        <title>The gerB region of the Bacillus subtilis 168 chromosome encodes a homologue of the gerA spore germination operon.</title>
        <authorList>
            <person name="Corfe B.M."/>
            <person name="Sammons R.L."/>
            <person name="Smith D.A."/>
            <person name="Maueel C."/>
        </authorList>
    </citation>
    <scope>NUCLEOTIDE SEQUENCE [GENOMIC DNA]</scope>
    <source>
        <strain>168</strain>
    </source>
</reference>
<reference key="2">
    <citation type="journal article" date="1997" name="Nature">
        <title>The complete genome sequence of the Gram-positive bacterium Bacillus subtilis.</title>
        <authorList>
            <person name="Kunst F."/>
            <person name="Ogasawara N."/>
            <person name="Moszer I."/>
            <person name="Albertini A.M."/>
            <person name="Alloni G."/>
            <person name="Azevedo V."/>
            <person name="Bertero M.G."/>
            <person name="Bessieres P."/>
            <person name="Bolotin A."/>
            <person name="Borchert S."/>
            <person name="Borriss R."/>
            <person name="Boursier L."/>
            <person name="Brans A."/>
            <person name="Braun M."/>
            <person name="Brignell S.C."/>
            <person name="Bron S."/>
            <person name="Brouillet S."/>
            <person name="Bruschi C.V."/>
            <person name="Caldwell B."/>
            <person name="Capuano V."/>
            <person name="Carter N.M."/>
            <person name="Choi S.-K."/>
            <person name="Codani J.-J."/>
            <person name="Connerton I.F."/>
            <person name="Cummings N.J."/>
            <person name="Daniel R.A."/>
            <person name="Denizot F."/>
            <person name="Devine K.M."/>
            <person name="Duesterhoeft A."/>
            <person name="Ehrlich S.D."/>
            <person name="Emmerson P.T."/>
            <person name="Entian K.-D."/>
            <person name="Errington J."/>
            <person name="Fabret C."/>
            <person name="Ferrari E."/>
            <person name="Foulger D."/>
            <person name="Fritz C."/>
            <person name="Fujita M."/>
            <person name="Fujita Y."/>
            <person name="Fuma S."/>
            <person name="Galizzi A."/>
            <person name="Galleron N."/>
            <person name="Ghim S.-Y."/>
            <person name="Glaser P."/>
            <person name="Goffeau A."/>
            <person name="Golightly E.J."/>
            <person name="Grandi G."/>
            <person name="Guiseppi G."/>
            <person name="Guy B.J."/>
            <person name="Haga K."/>
            <person name="Haiech J."/>
            <person name="Harwood C.R."/>
            <person name="Henaut A."/>
            <person name="Hilbert H."/>
            <person name="Holsappel S."/>
            <person name="Hosono S."/>
            <person name="Hullo M.-F."/>
            <person name="Itaya M."/>
            <person name="Jones L.-M."/>
            <person name="Joris B."/>
            <person name="Karamata D."/>
            <person name="Kasahara Y."/>
            <person name="Klaerr-Blanchard M."/>
            <person name="Klein C."/>
            <person name="Kobayashi Y."/>
            <person name="Koetter P."/>
            <person name="Koningstein G."/>
            <person name="Krogh S."/>
            <person name="Kumano M."/>
            <person name="Kurita K."/>
            <person name="Lapidus A."/>
            <person name="Lardinois S."/>
            <person name="Lauber J."/>
            <person name="Lazarevic V."/>
            <person name="Lee S.-M."/>
            <person name="Levine A."/>
            <person name="Liu H."/>
            <person name="Masuda S."/>
            <person name="Mauel C."/>
            <person name="Medigue C."/>
            <person name="Medina N."/>
            <person name="Mellado R.P."/>
            <person name="Mizuno M."/>
            <person name="Moestl D."/>
            <person name="Nakai S."/>
            <person name="Noback M."/>
            <person name="Noone D."/>
            <person name="O'Reilly M."/>
            <person name="Ogawa K."/>
            <person name="Ogiwara A."/>
            <person name="Oudega B."/>
            <person name="Park S.-H."/>
            <person name="Parro V."/>
            <person name="Pohl T.M."/>
            <person name="Portetelle D."/>
            <person name="Porwollik S."/>
            <person name="Prescott A.M."/>
            <person name="Presecan E."/>
            <person name="Pujic P."/>
            <person name="Purnelle B."/>
            <person name="Rapoport G."/>
            <person name="Rey M."/>
            <person name="Reynolds S."/>
            <person name="Rieger M."/>
            <person name="Rivolta C."/>
            <person name="Rocha E."/>
            <person name="Roche B."/>
            <person name="Rose M."/>
            <person name="Sadaie Y."/>
            <person name="Sato T."/>
            <person name="Scanlan E."/>
            <person name="Schleich S."/>
            <person name="Schroeter R."/>
            <person name="Scoffone F."/>
            <person name="Sekiguchi J."/>
            <person name="Sekowska A."/>
            <person name="Seror S.J."/>
            <person name="Serror P."/>
            <person name="Shin B.-S."/>
            <person name="Soldo B."/>
            <person name="Sorokin A."/>
            <person name="Tacconi E."/>
            <person name="Takagi T."/>
            <person name="Takahashi H."/>
            <person name="Takemaru K."/>
            <person name="Takeuchi M."/>
            <person name="Tamakoshi A."/>
            <person name="Tanaka T."/>
            <person name="Terpstra P."/>
            <person name="Tognoni A."/>
            <person name="Tosato V."/>
            <person name="Uchiyama S."/>
            <person name="Vandenbol M."/>
            <person name="Vannier F."/>
            <person name="Vassarotti A."/>
            <person name="Viari A."/>
            <person name="Wambutt R."/>
            <person name="Wedler E."/>
            <person name="Wedler H."/>
            <person name="Weitzenegger T."/>
            <person name="Winters P."/>
            <person name="Wipat A."/>
            <person name="Yamamoto H."/>
            <person name="Yamane K."/>
            <person name="Yasumoto K."/>
            <person name="Yata K."/>
            <person name="Yoshida K."/>
            <person name="Yoshikawa H.-F."/>
            <person name="Zumstein E."/>
            <person name="Yoshikawa H."/>
            <person name="Danchin A."/>
        </authorList>
    </citation>
    <scope>NUCLEOTIDE SEQUENCE [LARGE SCALE GENOMIC DNA]</scope>
    <source>
        <strain>168</strain>
    </source>
</reference>
<accession>P39571</accession>
<proteinExistence type="evidence at protein level"/>
<gene>
    <name type="primary">gerBC</name>
    <name type="ordered locus">BSU35820</name>
</gene>
<protein>
    <recommendedName>
        <fullName>Spore germination protein B3</fullName>
    </recommendedName>
</protein>
<name>GERBC_BACSU</name>
<feature type="signal peptide" evidence="1">
    <location>
        <begin position="1"/>
        <end position="19"/>
    </location>
</feature>
<feature type="chain" id="PRO_0000018174" description="Spore germination protein B3">
    <location>
        <begin position="20"/>
        <end position="374"/>
    </location>
</feature>
<feature type="lipid moiety-binding region" description="N-palmitoyl cysteine" evidence="2">
    <location>
        <position position="20"/>
    </location>
</feature>
<feature type="lipid moiety-binding region" description="S-diacylglycerol cysteine" evidence="2">
    <location>
        <position position="20"/>
    </location>
</feature>
<feature type="strand" evidence="3">
    <location>
        <begin position="32"/>
        <end position="39"/>
    </location>
</feature>
<feature type="strand" evidence="3">
    <location>
        <begin position="45"/>
        <end position="52"/>
    </location>
</feature>
<feature type="helix" evidence="3">
    <location>
        <begin position="66"/>
        <end position="68"/>
    </location>
</feature>
<feature type="strand" evidence="3">
    <location>
        <begin position="70"/>
        <end position="79"/>
    </location>
</feature>
<feature type="helix" evidence="3">
    <location>
        <begin position="83"/>
        <end position="87"/>
    </location>
</feature>
<feature type="strand" evidence="3">
    <location>
        <begin position="97"/>
        <end position="101"/>
    </location>
</feature>
<feature type="helix" evidence="3">
    <location>
        <begin position="103"/>
        <end position="108"/>
    </location>
</feature>
<feature type="helix" evidence="3">
    <location>
        <begin position="111"/>
        <end position="118"/>
    </location>
</feature>
<feature type="helix" evidence="3">
    <location>
        <begin position="121"/>
        <end position="123"/>
    </location>
</feature>
<feature type="strand" evidence="3">
    <location>
        <begin position="129"/>
        <end position="135"/>
    </location>
</feature>
<feature type="turn" evidence="3">
    <location>
        <begin position="138"/>
        <end position="140"/>
    </location>
</feature>
<feature type="helix" evidence="3">
    <location>
        <begin position="176"/>
        <end position="184"/>
    </location>
</feature>
<feature type="strand" evidence="3">
    <location>
        <begin position="189"/>
        <end position="210"/>
    </location>
</feature>
<feature type="turn" evidence="3">
    <location>
        <begin position="211"/>
        <end position="214"/>
    </location>
</feature>
<feature type="strand" evidence="3">
    <location>
        <begin position="215"/>
        <end position="220"/>
    </location>
</feature>
<feature type="helix" evidence="3">
    <location>
        <begin position="222"/>
        <end position="231"/>
    </location>
</feature>
<feature type="strand" evidence="3">
    <location>
        <begin position="239"/>
        <end position="244"/>
    </location>
</feature>
<feature type="strand" evidence="3">
    <location>
        <begin position="247"/>
        <end position="264"/>
    </location>
</feature>
<feature type="strand" evidence="3">
    <location>
        <begin position="266"/>
        <end position="282"/>
    </location>
</feature>
<feature type="helix" evidence="3">
    <location>
        <begin position="295"/>
        <end position="321"/>
    </location>
</feature>
<feature type="helix" evidence="3">
    <location>
        <begin position="330"/>
        <end position="337"/>
    </location>
</feature>
<feature type="helix" evidence="3">
    <location>
        <begin position="339"/>
        <end position="345"/>
    </location>
</feature>
<feature type="helix" evidence="3">
    <location>
        <begin position="346"/>
        <end position="348"/>
    </location>
</feature>
<feature type="helix" evidence="3">
    <location>
        <begin position="349"/>
        <end position="355"/>
    </location>
</feature>
<feature type="strand" evidence="3">
    <location>
        <begin position="357"/>
        <end position="366"/>
    </location>
</feature>
<dbReference type="EMBL" id="L16960">
    <property type="protein sequence ID" value="AAA22468.1"/>
    <property type="molecule type" value="Genomic_DNA"/>
</dbReference>
<dbReference type="EMBL" id="AL009126">
    <property type="protein sequence ID" value="CAB15599.1"/>
    <property type="molecule type" value="Genomic_DNA"/>
</dbReference>
<dbReference type="PIR" id="I39857">
    <property type="entry name" value="I39857"/>
</dbReference>
<dbReference type="RefSeq" id="NP_391463.1">
    <property type="nucleotide sequence ID" value="NC_000964.3"/>
</dbReference>
<dbReference type="RefSeq" id="WP_003242990.1">
    <property type="nucleotide sequence ID" value="NZ_OZ025638.1"/>
</dbReference>
<dbReference type="PDB" id="3N54">
    <property type="method" value="X-ray"/>
    <property type="resolution" value="2.30 A"/>
    <property type="chains" value="B=25-374"/>
</dbReference>
<dbReference type="PDBsum" id="3N54"/>
<dbReference type="SMR" id="P39571"/>
<dbReference type="FunCoup" id="P39571">
    <property type="interactions" value="99"/>
</dbReference>
<dbReference type="STRING" id="224308.BSU35820"/>
<dbReference type="PaxDb" id="224308-BSU35820"/>
<dbReference type="EnsemblBacteria" id="CAB15599">
    <property type="protein sequence ID" value="CAB15599"/>
    <property type="gene ID" value="BSU_35820"/>
</dbReference>
<dbReference type="GeneID" id="936819"/>
<dbReference type="KEGG" id="bsu:BSU35820"/>
<dbReference type="PATRIC" id="fig|224308.179.peg.3878"/>
<dbReference type="eggNOG" id="ENOG502Z8GN">
    <property type="taxonomic scope" value="Bacteria"/>
</dbReference>
<dbReference type="InParanoid" id="P39571"/>
<dbReference type="OrthoDB" id="2569624at2"/>
<dbReference type="PhylomeDB" id="P39571"/>
<dbReference type="BioCyc" id="BSUB:BSU35820-MONOMER"/>
<dbReference type="EvolutionaryTrace" id="P39571"/>
<dbReference type="Proteomes" id="UP000001570">
    <property type="component" value="Chromosome"/>
</dbReference>
<dbReference type="GO" id="GO:0005886">
    <property type="term" value="C:plasma membrane"/>
    <property type="evidence" value="ECO:0007669"/>
    <property type="project" value="UniProtKB-SubCell"/>
</dbReference>
<dbReference type="GO" id="GO:0009847">
    <property type="term" value="P:spore germination"/>
    <property type="evidence" value="ECO:0007669"/>
    <property type="project" value="InterPro"/>
</dbReference>
<dbReference type="Gene3D" id="6.20.190.10">
    <property type="entry name" value="Nutrient germinant receptor protein C, domain 1"/>
    <property type="match status" value="1"/>
</dbReference>
<dbReference type="Gene3D" id="3.30.300.210">
    <property type="entry name" value="Nutrient germinant receptor protein C, domain 3"/>
    <property type="match status" value="1"/>
</dbReference>
<dbReference type="InterPro" id="IPR008844">
    <property type="entry name" value="Spore_GerAC-like"/>
</dbReference>
<dbReference type="InterPro" id="IPR046953">
    <property type="entry name" value="Spore_GerAC-like_C"/>
</dbReference>
<dbReference type="InterPro" id="IPR038501">
    <property type="entry name" value="Spore_GerAC_C_sf"/>
</dbReference>
<dbReference type="NCBIfam" id="TIGR02887">
    <property type="entry name" value="spore_ger_x_C"/>
    <property type="match status" value="1"/>
</dbReference>
<dbReference type="PANTHER" id="PTHR35789">
    <property type="entry name" value="SPORE GERMINATION PROTEIN B3"/>
    <property type="match status" value="1"/>
</dbReference>
<dbReference type="PANTHER" id="PTHR35789:SF1">
    <property type="entry name" value="SPORE GERMINATION PROTEIN B3"/>
    <property type="match status" value="1"/>
</dbReference>
<dbReference type="Pfam" id="PF05504">
    <property type="entry name" value="Spore_GerAC"/>
    <property type="match status" value="1"/>
</dbReference>
<dbReference type="Pfam" id="PF25198">
    <property type="entry name" value="Spore_GerAC_N"/>
    <property type="match status" value="1"/>
</dbReference>
<dbReference type="PROSITE" id="PS51257">
    <property type="entry name" value="PROKAR_LIPOPROTEIN"/>
    <property type="match status" value="1"/>
</dbReference>
<organism>
    <name type="scientific">Bacillus subtilis (strain 168)</name>
    <dbReference type="NCBI Taxonomy" id="224308"/>
    <lineage>
        <taxon>Bacteria</taxon>
        <taxon>Bacillati</taxon>
        <taxon>Bacillota</taxon>
        <taxon>Bacilli</taxon>
        <taxon>Bacillales</taxon>
        <taxon>Bacillaceae</taxon>
        <taxon>Bacillus</taxon>
    </lineage>
</organism>
<keyword id="KW-0002">3D-structure</keyword>
<keyword id="KW-1003">Cell membrane</keyword>
<keyword id="KW-0309">Germination</keyword>
<keyword id="KW-0449">Lipoprotein</keyword>
<keyword id="KW-0472">Membrane</keyword>
<keyword id="KW-0564">Palmitate</keyword>
<keyword id="KW-1185">Reference proteome</keyword>
<keyword id="KW-0732">Signal</keyword>
<comment type="function">
    <text>Involved in the response to the germinative mixture of L-asparagine, glucose, fructose and potassium ions (AGFK). Cannot stimulate germination in the absence of gerD and gerK gene products (fructose and glucose receptors respectively).</text>
</comment>
<comment type="subcellular location">
    <subcellularLocation>
        <location evidence="2">Cell membrane</location>
        <topology evidence="2">Lipid-anchor</topology>
    </subcellularLocation>
</comment>
<comment type="developmental stage">
    <text>Expressed in the forespore compartment of the developing sporangium.</text>
</comment>
<comment type="similarity">
    <text evidence="2">Belongs to the GerABKC lipoprotein family.</text>
</comment>
<sequence length="374" mass="42469">MKTASKFSVMFFMLLALCGCWDVKDIEQLSFARGLAIDETNDHQYKLTYQNLLPQSEDSQASGKPEFVNVTSHGKTILEAVSDVSIKDPPVYSDHLKVILLGEKLMRNQNVDQVLNHFIRDDELRRSSYLMAARGNAADVFTKGNPNQQQPMPSEKLIDLTTHSGYNGKIMIPLRIGRASVYSQNGYSYLIQAVKNEKGKAKYDGAGIIKRGSNKLVGFLSADETQTLSWVMGTIQGGVMPTTDKGHPITFEIKKSKTKIKPVIENGKPVFHISVKTKGILTEDQNPNENSFSKSYLHRLENIFEKKLERDVKQVMDKLQHEYKTDPVFLSDHIRIQHPDYWNKVKGHWDEIFSETDFKYDISFKIINFGTVGK</sequence>